<accession>Q1I9D2</accession>
<evidence type="ECO:0000255" key="1">
    <source>
        <dbReference type="HAMAP-Rule" id="MF_00316"/>
    </source>
</evidence>
<organism>
    <name type="scientific">Pseudomonas entomophila (strain L48)</name>
    <dbReference type="NCBI Taxonomy" id="384676"/>
    <lineage>
        <taxon>Bacteria</taxon>
        <taxon>Pseudomonadati</taxon>
        <taxon>Pseudomonadota</taxon>
        <taxon>Gammaproteobacteria</taxon>
        <taxon>Pseudomonadales</taxon>
        <taxon>Pseudomonadaceae</taxon>
        <taxon>Pseudomonas</taxon>
    </lineage>
</organism>
<protein>
    <recommendedName>
        <fullName evidence="1">Molybdenum cofactor guanylyltransferase</fullName>
        <shortName evidence="1">MoCo guanylyltransferase</shortName>
        <ecNumber evidence="1">2.7.7.77</ecNumber>
    </recommendedName>
    <alternativeName>
        <fullName evidence="1">GTP:molybdopterin guanylyltransferase</fullName>
    </alternativeName>
    <alternativeName>
        <fullName evidence="1">Mo-MPT guanylyltransferase</fullName>
    </alternativeName>
    <alternativeName>
        <fullName evidence="1">Molybdopterin guanylyltransferase</fullName>
    </alternativeName>
    <alternativeName>
        <fullName evidence="1">Molybdopterin-guanine dinucleotide synthase</fullName>
        <shortName evidence="1">MGD synthase</shortName>
    </alternativeName>
</protein>
<feature type="chain" id="PRO_1000019132" description="Molybdenum cofactor guanylyltransferase">
    <location>
        <begin position="1"/>
        <end position="191"/>
    </location>
</feature>
<feature type="binding site" evidence="1">
    <location>
        <begin position="13"/>
        <end position="15"/>
    </location>
    <ligand>
        <name>GTP</name>
        <dbReference type="ChEBI" id="CHEBI:37565"/>
    </ligand>
</feature>
<feature type="binding site" evidence="1">
    <location>
        <position position="26"/>
    </location>
    <ligand>
        <name>GTP</name>
        <dbReference type="ChEBI" id="CHEBI:37565"/>
    </ligand>
</feature>
<feature type="binding site" evidence="1">
    <location>
        <position position="72"/>
    </location>
    <ligand>
        <name>GTP</name>
        <dbReference type="ChEBI" id="CHEBI:37565"/>
    </ligand>
</feature>
<feature type="binding site" evidence="1">
    <location>
        <position position="102"/>
    </location>
    <ligand>
        <name>GTP</name>
        <dbReference type="ChEBI" id="CHEBI:37565"/>
    </ligand>
</feature>
<feature type="binding site" evidence="1">
    <location>
        <position position="102"/>
    </location>
    <ligand>
        <name>Mg(2+)</name>
        <dbReference type="ChEBI" id="CHEBI:18420"/>
    </ligand>
</feature>
<proteinExistence type="inferred from homology"/>
<comment type="function">
    <text evidence="1">Transfers a GMP moiety from GTP to Mo-molybdopterin (Mo-MPT) cofactor (Moco or molybdenum cofactor) to form Mo-molybdopterin guanine dinucleotide (Mo-MGD) cofactor.</text>
</comment>
<comment type="catalytic activity">
    <reaction evidence="1">
        <text>Mo-molybdopterin + GTP + H(+) = Mo-molybdopterin guanine dinucleotide + diphosphate</text>
        <dbReference type="Rhea" id="RHEA:34243"/>
        <dbReference type="ChEBI" id="CHEBI:15378"/>
        <dbReference type="ChEBI" id="CHEBI:33019"/>
        <dbReference type="ChEBI" id="CHEBI:37565"/>
        <dbReference type="ChEBI" id="CHEBI:71302"/>
        <dbReference type="ChEBI" id="CHEBI:71310"/>
        <dbReference type="EC" id="2.7.7.77"/>
    </reaction>
</comment>
<comment type="cofactor">
    <cofactor evidence="1">
        <name>Mg(2+)</name>
        <dbReference type="ChEBI" id="CHEBI:18420"/>
    </cofactor>
</comment>
<comment type="subunit">
    <text evidence="1">Monomer.</text>
</comment>
<comment type="subcellular location">
    <subcellularLocation>
        <location evidence="1">Cytoplasm</location>
    </subcellularLocation>
</comment>
<comment type="domain">
    <text evidence="1">The N-terminal domain determines nucleotide recognition and specific binding, while the C-terminal domain determines the specific binding to the target protein.</text>
</comment>
<comment type="similarity">
    <text evidence="1">Belongs to the MobA family.</text>
</comment>
<dbReference type="EC" id="2.7.7.77" evidence="1"/>
<dbReference type="EMBL" id="CT573326">
    <property type="protein sequence ID" value="CAK15746.1"/>
    <property type="molecule type" value="Genomic_DNA"/>
</dbReference>
<dbReference type="RefSeq" id="WP_011534134.1">
    <property type="nucleotide sequence ID" value="NC_008027.1"/>
</dbReference>
<dbReference type="SMR" id="Q1I9D2"/>
<dbReference type="STRING" id="384676.PSEEN2972"/>
<dbReference type="GeneID" id="32806091"/>
<dbReference type="KEGG" id="pen:PSEEN2972"/>
<dbReference type="eggNOG" id="COG0746">
    <property type="taxonomic scope" value="Bacteria"/>
</dbReference>
<dbReference type="HOGENOM" id="CLU_055597_5_1_6"/>
<dbReference type="OrthoDB" id="9788394at2"/>
<dbReference type="Proteomes" id="UP000000658">
    <property type="component" value="Chromosome"/>
</dbReference>
<dbReference type="GO" id="GO:0005737">
    <property type="term" value="C:cytoplasm"/>
    <property type="evidence" value="ECO:0007669"/>
    <property type="project" value="UniProtKB-SubCell"/>
</dbReference>
<dbReference type="GO" id="GO:0005525">
    <property type="term" value="F:GTP binding"/>
    <property type="evidence" value="ECO:0007669"/>
    <property type="project" value="UniProtKB-UniRule"/>
</dbReference>
<dbReference type="GO" id="GO:0046872">
    <property type="term" value="F:metal ion binding"/>
    <property type="evidence" value="ECO:0007669"/>
    <property type="project" value="UniProtKB-KW"/>
</dbReference>
<dbReference type="GO" id="GO:0061603">
    <property type="term" value="F:molybdenum cofactor guanylyltransferase activity"/>
    <property type="evidence" value="ECO:0007669"/>
    <property type="project" value="UniProtKB-EC"/>
</dbReference>
<dbReference type="GO" id="GO:1902758">
    <property type="term" value="P:bis(molybdopterin guanine dinucleotide)molybdenum biosynthetic process"/>
    <property type="evidence" value="ECO:0007669"/>
    <property type="project" value="TreeGrafter"/>
</dbReference>
<dbReference type="CDD" id="cd02503">
    <property type="entry name" value="MobA"/>
    <property type="match status" value="1"/>
</dbReference>
<dbReference type="Gene3D" id="3.90.550.10">
    <property type="entry name" value="Spore Coat Polysaccharide Biosynthesis Protein SpsA, Chain A"/>
    <property type="match status" value="1"/>
</dbReference>
<dbReference type="HAMAP" id="MF_00316">
    <property type="entry name" value="MobA"/>
    <property type="match status" value="1"/>
</dbReference>
<dbReference type="InterPro" id="IPR025877">
    <property type="entry name" value="MobA-like_NTP_Trfase"/>
</dbReference>
<dbReference type="InterPro" id="IPR013482">
    <property type="entry name" value="Molybde_CF_guanTrfase"/>
</dbReference>
<dbReference type="InterPro" id="IPR029044">
    <property type="entry name" value="Nucleotide-diphossugar_trans"/>
</dbReference>
<dbReference type="NCBIfam" id="TIGR02665">
    <property type="entry name" value="molyb_mobA"/>
    <property type="match status" value="1"/>
</dbReference>
<dbReference type="PANTHER" id="PTHR19136">
    <property type="entry name" value="MOLYBDENUM COFACTOR GUANYLYLTRANSFERASE"/>
    <property type="match status" value="1"/>
</dbReference>
<dbReference type="PANTHER" id="PTHR19136:SF81">
    <property type="entry name" value="MOLYBDENUM COFACTOR GUANYLYLTRANSFERASE"/>
    <property type="match status" value="1"/>
</dbReference>
<dbReference type="Pfam" id="PF12804">
    <property type="entry name" value="NTP_transf_3"/>
    <property type="match status" value="1"/>
</dbReference>
<dbReference type="SUPFAM" id="SSF53448">
    <property type="entry name" value="Nucleotide-diphospho-sugar transferases"/>
    <property type="match status" value="1"/>
</dbReference>
<reference key="1">
    <citation type="journal article" date="2006" name="Nat. Biotechnol.">
        <title>Complete genome sequence of the entomopathogenic and metabolically versatile soil bacterium Pseudomonas entomophila.</title>
        <authorList>
            <person name="Vodovar N."/>
            <person name="Vallenet D."/>
            <person name="Cruveiller S."/>
            <person name="Rouy Z."/>
            <person name="Barbe V."/>
            <person name="Acosta C."/>
            <person name="Cattolico L."/>
            <person name="Jubin C."/>
            <person name="Lajus A."/>
            <person name="Segurens B."/>
            <person name="Vacherie B."/>
            <person name="Wincker P."/>
            <person name="Weissenbach J."/>
            <person name="Lemaitre B."/>
            <person name="Medigue C."/>
            <person name="Boccard F."/>
        </authorList>
    </citation>
    <scope>NUCLEOTIDE SEQUENCE [LARGE SCALE GENOMIC DNA]</scope>
    <source>
        <strain>L48</strain>
    </source>
</reference>
<sequence length="191" mass="20928">MSTALPLCSILILAGGRGQRMGGRDKGLVSWHGEPLVAHVQHVVREFSDDVVISCNRNQERYALYADQLVSDAEVDFPGPLAGVITGLKVARHEWVVMLACDAPLIDQALIEGLLRLAVEHDSAAMVRQGGYWQPMFSVLPRRVLPMLEHAWAAGERSLQKALLGAVPVQALECAENDQRLSNFNSPELLL</sequence>
<name>MOBA_PSEE4</name>
<gene>
    <name evidence="1" type="primary">mobA</name>
    <name type="ordered locus">PSEEN2972</name>
</gene>
<keyword id="KW-0963">Cytoplasm</keyword>
<keyword id="KW-0342">GTP-binding</keyword>
<keyword id="KW-0460">Magnesium</keyword>
<keyword id="KW-0479">Metal-binding</keyword>
<keyword id="KW-0501">Molybdenum cofactor biosynthesis</keyword>
<keyword id="KW-0547">Nucleotide-binding</keyword>
<keyword id="KW-0808">Transferase</keyword>